<name>GUAAB_METBF</name>
<dbReference type="EC" id="6.3.5.2" evidence="1"/>
<dbReference type="EMBL" id="CP000099">
    <property type="protein sequence ID" value="AAZ70146.1"/>
    <property type="molecule type" value="Genomic_DNA"/>
</dbReference>
<dbReference type="SMR" id="Q46D96"/>
<dbReference type="STRING" id="269797.Mbar_A1178"/>
<dbReference type="PaxDb" id="269797-Mbar_A1178"/>
<dbReference type="KEGG" id="mba:Mbar_A1178"/>
<dbReference type="eggNOG" id="arCOG00085">
    <property type="taxonomic scope" value="Archaea"/>
</dbReference>
<dbReference type="HOGENOM" id="CLU_014340_0_0_2"/>
<dbReference type="OrthoDB" id="33844at2157"/>
<dbReference type="UniPathway" id="UPA00189">
    <property type="reaction ID" value="UER00296"/>
</dbReference>
<dbReference type="GO" id="GO:0005829">
    <property type="term" value="C:cytosol"/>
    <property type="evidence" value="ECO:0007669"/>
    <property type="project" value="TreeGrafter"/>
</dbReference>
<dbReference type="GO" id="GO:0005524">
    <property type="term" value="F:ATP binding"/>
    <property type="evidence" value="ECO:0007669"/>
    <property type="project" value="UniProtKB-UniRule"/>
</dbReference>
<dbReference type="GO" id="GO:0003921">
    <property type="term" value="F:GMP synthase activity"/>
    <property type="evidence" value="ECO:0007669"/>
    <property type="project" value="InterPro"/>
</dbReference>
<dbReference type="CDD" id="cd01997">
    <property type="entry name" value="GMP_synthase_C"/>
    <property type="match status" value="1"/>
</dbReference>
<dbReference type="FunFam" id="3.30.300.10:FF:000002">
    <property type="entry name" value="GMP synthase [glutamine-hydrolyzing]"/>
    <property type="match status" value="1"/>
</dbReference>
<dbReference type="FunFam" id="3.40.50.620:FF:000208">
    <property type="entry name" value="GMP synthase [glutamine-hydrolyzing] subunit B"/>
    <property type="match status" value="1"/>
</dbReference>
<dbReference type="Gene3D" id="3.30.300.10">
    <property type="match status" value="1"/>
</dbReference>
<dbReference type="Gene3D" id="3.40.50.620">
    <property type="entry name" value="HUPs"/>
    <property type="match status" value="1"/>
</dbReference>
<dbReference type="HAMAP" id="MF_00345">
    <property type="entry name" value="GMP_synthase_B"/>
    <property type="match status" value="1"/>
</dbReference>
<dbReference type="InterPro" id="IPR001674">
    <property type="entry name" value="GMP_synth_C"/>
</dbReference>
<dbReference type="InterPro" id="IPR026598">
    <property type="entry name" value="GMP_synthase_B"/>
</dbReference>
<dbReference type="InterPro" id="IPR025777">
    <property type="entry name" value="GMPS_ATP_PPase_dom"/>
</dbReference>
<dbReference type="InterPro" id="IPR014729">
    <property type="entry name" value="Rossmann-like_a/b/a_fold"/>
</dbReference>
<dbReference type="NCBIfam" id="TIGR00884">
    <property type="entry name" value="guaA_Cterm"/>
    <property type="match status" value="1"/>
</dbReference>
<dbReference type="PANTHER" id="PTHR11922:SF2">
    <property type="entry name" value="GMP SYNTHASE [GLUTAMINE-HYDROLYZING]"/>
    <property type="match status" value="1"/>
</dbReference>
<dbReference type="PANTHER" id="PTHR11922">
    <property type="entry name" value="GMP SYNTHASE-RELATED"/>
    <property type="match status" value="1"/>
</dbReference>
<dbReference type="Pfam" id="PF00958">
    <property type="entry name" value="GMP_synt_C"/>
    <property type="match status" value="1"/>
</dbReference>
<dbReference type="SUPFAM" id="SSF52402">
    <property type="entry name" value="Adenine nucleotide alpha hydrolases-like"/>
    <property type="match status" value="1"/>
</dbReference>
<dbReference type="SUPFAM" id="SSF54810">
    <property type="entry name" value="GMP synthetase C-terminal dimerisation domain"/>
    <property type="match status" value="1"/>
</dbReference>
<dbReference type="PROSITE" id="PS51553">
    <property type="entry name" value="GMPS_ATP_PPASE"/>
    <property type="match status" value="1"/>
</dbReference>
<gene>
    <name evidence="1" type="primary">guaAB</name>
    <name type="ordered locus">Mbar_A1178</name>
</gene>
<organism>
    <name type="scientific">Methanosarcina barkeri (strain Fusaro / DSM 804)</name>
    <dbReference type="NCBI Taxonomy" id="269797"/>
    <lineage>
        <taxon>Archaea</taxon>
        <taxon>Methanobacteriati</taxon>
        <taxon>Methanobacteriota</taxon>
        <taxon>Stenosarchaea group</taxon>
        <taxon>Methanomicrobia</taxon>
        <taxon>Methanosarcinales</taxon>
        <taxon>Methanosarcinaceae</taxon>
        <taxon>Methanosarcina</taxon>
    </lineage>
</organism>
<proteinExistence type="inferred from homology"/>
<reference key="1">
    <citation type="journal article" date="2006" name="J. Bacteriol.">
        <title>The Methanosarcina barkeri genome: comparative analysis with Methanosarcina acetivorans and Methanosarcina mazei reveals extensive rearrangement within methanosarcinal genomes.</title>
        <authorList>
            <person name="Maeder D.L."/>
            <person name="Anderson I."/>
            <person name="Brettin T.S."/>
            <person name="Bruce D.C."/>
            <person name="Gilna P."/>
            <person name="Han C.S."/>
            <person name="Lapidus A."/>
            <person name="Metcalf W.W."/>
            <person name="Saunders E."/>
            <person name="Tapia R."/>
            <person name="Sowers K.R."/>
        </authorList>
    </citation>
    <scope>NUCLEOTIDE SEQUENCE [LARGE SCALE GENOMIC DNA]</scope>
    <source>
        <strain>Fusaro / DSM 804</strain>
    </source>
</reference>
<protein>
    <recommendedName>
        <fullName evidence="1">GMP synthase [glutamine-hydrolyzing] subunit B</fullName>
        <ecNumber evidence="1">6.3.5.2</ecNumber>
    </recommendedName>
    <alternativeName>
        <fullName evidence="1">GMP synthetase</fullName>
    </alternativeName>
</protein>
<comment type="function">
    <text evidence="1">Catalyzes the synthesis of GMP from XMP.</text>
</comment>
<comment type="catalytic activity">
    <reaction evidence="1">
        <text>XMP + L-glutamine + ATP + H2O = GMP + L-glutamate + AMP + diphosphate + 2 H(+)</text>
        <dbReference type="Rhea" id="RHEA:11680"/>
        <dbReference type="ChEBI" id="CHEBI:15377"/>
        <dbReference type="ChEBI" id="CHEBI:15378"/>
        <dbReference type="ChEBI" id="CHEBI:29985"/>
        <dbReference type="ChEBI" id="CHEBI:30616"/>
        <dbReference type="ChEBI" id="CHEBI:33019"/>
        <dbReference type="ChEBI" id="CHEBI:57464"/>
        <dbReference type="ChEBI" id="CHEBI:58115"/>
        <dbReference type="ChEBI" id="CHEBI:58359"/>
        <dbReference type="ChEBI" id="CHEBI:456215"/>
        <dbReference type="EC" id="6.3.5.2"/>
    </reaction>
</comment>
<comment type="pathway">
    <text evidence="1">Purine metabolism; GMP biosynthesis; GMP from XMP (L-Gln route): step 1/1.</text>
</comment>
<comment type="subunit">
    <text evidence="1">Heterodimer composed of a glutamine amidotransferase subunit (A) and a GMP-binding subunit (B).</text>
</comment>
<sequence length="305" mass="34093">MVKPEKFIPKAVEKISKEIKDGRAIIALSGGVDSSVCAELAHRAIGGRLQPIYIDTGLMRKGETERIKHIFSHMNLDIVYAKDRFLAALKGITDPEEKRKAIGETFIRVFEEEARKLEADYLIQGTIYPDRIESEGGIKSHHNVGGLPSVMDFKKIVEPIEDLYKDEVREVAWALKLPDEICERMPFPGPGLAVRILGEVTEEKLEVAREANSIVEEELLDRFCPWQTFAAVIGKGTGVKGDIRAYGWIIAVRAVGSRDGMTAEALELPWDVLKKLESRITSEIPKVARVVYDITPKPPATIEFE</sequence>
<accession>Q46D96</accession>
<evidence type="ECO:0000255" key="1">
    <source>
        <dbReference type="HAMAP-Rule" id="MF_00345"/>
    </source>
</evidence>
<keyword id="KW-0067">ATP-binding</keyword>
<keyword id="KW-0332">GMP biosynthesis</keyword>
<keyword id="KW-0436">Ligase</keyword>
<keyword id="KW-0547">Nucleotide-binding</keyword>
<keyword id="KW-0658">Purine biosynthesis</keyword>
<feature type="chain" id="PRO_1000048376" description="GMP synthase [glutamine-hydrolyzing] subunit B">
    <location>
        <begin position="1"/>
        <end position="305"/>
    </location>
</feature>
<feature type="domain" description="GMPS ATP-PPase" evidence="1">
    <location>
        <begin position="2"/>
        <end position="184"/>
    </location>
</feature>
<feature type="binding site" evidence="1">
    <location>
        <begin position="29"/>
        <end position="35"/>
    </location>
    <ligand>
        <name>ATP</name>
        <dbReference type="ChEBI" id="CHEBI:30616"/>
    </ligand>
</feature>